<reference key="1">
    <citation type="journal article" date="2004" name="Nat. Genet.">
        <title>Complete sequencing and characterization of 21,243 full-length human cDNAs.</title>
        <authorList>
            <person name="Ota T."/>
            <person name="Suzuki Y."/>
            <person name="Nishikawa T."/>
            <person name="Otsuki T."/>
            <person name="Sugiyama T."/>
            <person name="Irie R."/>
            <person name="Wakamatsu A."/>
            <person name="Hayashi K."/>
            <person name="Sato H."/>
            <person name="Nagai K."/>
            <person name="Kimura K."/>
            <person name="Makita H."/>
            <person name="Sekine M."/>
            <person name="Obayashi M."/>
            <person name="Nishi T."/>
            <person name="Shibahara T."/>
            <person name="Tanaka T."/>
            <person name="Ishii S."/>
            <person name="Yamamoto J."/>
            <person name="Saito K."/>
            <person name="Kawai Y."/>
            <person name="Isono Y."/>
            <person name="Nakamura Y."/>
            <person name="Nagahari K."/>
            <person name="Murakami K."/>
            <person name="Yasuda T."/>
            <person name="Iwayanagi T."/>
            <person name="Wagatsuma M."/>
            <person name="Shiratori A."/>
            <person name="Sudo H."/>
            <person name="Hosoiri T."/>
            <person name="Kaku Y."/>
            <person name="Kodaira H."/>
            <person name="Kondo H."/>
            <person name="Sugawara M."/>
            <person name="Takahashi M."/>
            <person name="Kanda K."/>
            <person name="Yokoi T."/>
            <person name="Furuya T."/>
            <person name="Kikkawa E."/>
            <person name="Omura Y."/>
            <person name="Abe K."/>
            <person name="Kamihara K."/>
            <person name="Katsuta N."/>
            <person name="Sato K."/>
            <person name="Tanikawa M."/>
            <person name="Yamazaki M."/>
            <person name="Ninomiya K."/>
            <person name="Ishibashi T."/>
            <person name="Yamashita H."/>
            <person name="Murakawa K."/>
            <person name="Fujimori K."/>
            <person name="Tanai H."/>
            <person name="Kimata M."/>
            <person name="Watanabe M."/>
            <person name="Hiraoka S."/>
            <person name="Chiba Y."/>
            <person name="Ishida S."/>
            <person name="Ono Y."/>
            <person name="Takiguchi S."/>
            <person name="Watanabe S."/>
            <person name="Yosida M."/>
            <person name="Hotuta T."/>
            <person name="Kusano J."/>
            <person name="Kanehori K."/>
            <person name="Takahashi-Fujii A."/>
            <person name="Hara H."/>
            <person name="Tanase T.-O."/>
            <person name="Nomura Y."/>
            <person name="Togiya S."/>
            <person name="Komai F."/>
            <person name="Hara R."/>
            <person name="Takeuchi K."/>
            <person name="Arita M."/>
            <person name="Imose N."/>
            <person name="Musashino K."/>
            <person name="Yuuki H."/>
            <person name="Oshima A."/>
            <person name="Sasaki N."/>
            <person name="Aotsuka S."/>
            <person name="Yoshikawa Y."/>
            <person name="Matsunawa H."/>
            <person name="Ichihara T."/>
            <person name="Shiohata N."/>
            <person name="Sano S."/>
            <person name="Moriya S."/>
            <person name="Momiyama H."/>
            <person name="Satoh N."/>
            <person name="Takami S."/>
            <person name="Terashima Y."/>
            <person name="Suzuki O."/>
            <person name="Nakagawa S."/>
            <person name="Senoh A."/>
            <person name="Mizoguchi H."/>
            <person name="Goto Y."/>
            <person name="Shimizu F."/>
            <person name="Wakebe H."/>
            <person name="Hishigaki H."/>
            <person name="Watanabe T."/>
            <person name="Sugiyama A."/>
            <person name="Takemoto M."/>
            <person name="Kawakami B."/>
            <person name="Yamazaki M."/>
            <person name="Watanabe K."/>
            <person name="Kumagai A."/>
            <person name="Itakura S."/>
            <person name="Fukuzumi Y."/>
            <person name="Fujimori Y."/>
            <person name="Komiyama M."/>
            <person name="Tashiro H."/>
            <person name="Tanigami A."/>
            <person name="Fujiwara T."/>
            <person name="Ono T."/>
            <person name="Yamada K."/>
            <person name="Fujii Y."/>
            <person name="Ozaki K."/>
            <person name="Hirao M."/>
            <person name="Ohmori Y."/>
            <person name="Kawabata A."/>
            <person name="Hikiji T."/>
            <person name="Kobatake N."/>
            <person name="Inagaki H."/>
            <person name="Ikema Y."/>
            <person name="Okamoto S."/>
            <person name="Okitani R."/>
            <person name="Kawakami T."/>
            <person name="Noguchi S."/>
            <person name="Itoh T."/>
            <person name="Shigeta K."/>
            <person name="Senba T."/>
            <person name="Matsumura K."/>
            <person name="Nakajima Y."/>
            <person name="Mizuno T."/>
            <person name="Morinaga M."/>
            <person name="Sasaki M."/>
            <person name="Togashi T."/>
            <person name="Oyama M."/>
            <person name="Hata H."/>
            <person name="Watanabe M."/>
            <person name="Komatsu T."/>
            <person name="Mizushima-Sugano J."/>
            <person name="Satoh T."/>
            <person name="Shirai Y."/>
            <person name="Takahashi Y."/>
            <person name="Nakagawa K."/>
            <person name="Okumura K."/>
            <person name="Nagase T."/>
            <person name="Nomura N."/>
            <person name="Kikuchi H."/>
            <person name="Masuho Y."/>
            <person name="Yamashita R."/>
            <person name="Nakai K."/>
            <person name="Yada T."/>
            <person name="Nakamura Y."/>
            <person name="Ohara O."/>
            <person name="Isogai T."/>
            <person name="Sugano S."/>
        </authorList>
    </citation>
    <scope>NUCLEOTIDE SEQUENCE [LARGE SCALE MRNA]</scope>
</reference>
<reference key="2">
    <citation type="journal article" date="2006" name="Nature">
        <title>The DNA sequence, annotation and analysis of human chromosome 3.</title>
        <authorList>
            <person name="Muzny D.M."/>
            <person name="Scherer S.E."/>
            <person name="Kaul R."/>
            <person name="Wang J."/>
            <person name="Yu J."/>
            <person name="Sudbrak R."/>
            <person name="Buhay C.J."/>
            <person name="Chen R."/>
            <person name="Cree A."/>
            <person name="Ding Y."/>
            <person name="Dugan-Rocha S."/>
            <person name="Gill R."/>
            <person name="Gunaratne P."/>
            <person name="Harris R.A."/>
            <person name="Hawes A.C."/>
            <person name="Hernandez J."/>
            <person name="Hodgson A.V."/>
            <person name="Hume J."/>
            <person name="Jackson A."/>
            <person name="Khan Z.M."/>
            <person name="Kovar-Smith C."/>
            <person name="Lewis L.R."/>
            <person name="Lozado R.J."/>
            <person name="Metzker M.L."/>
            <person name="Milosavljevic A."/>
            <person name="Miner G.R."/>
            <person name="Morgan M.B."/>
            <person name="Nazareth L.V."/>
            <person name="Scott G."/>
            <person name="Sodergren E."/>
            <person name="Song X.-Z."/>
            <person name="Steffen D."/>
            <person name="Wei S."/>
            <person name="Wheeler D.A."/>
            <person name="Wright M.W."/>
            <person name="Worley K.C."/>
            <person name="Yuan Y."/>
            <person name="Zhang Z."/>
            <person name="Adams C.Q."/>
            <person name="Ansari-Lari M.A."/>
            <person name="Ayele M."/>
            <person name="Brown M.J."/>
            <person name="Chen G."/>
            <person name="Chen Z."/>
            <person name="Clendenning J."/>
            <person name="Clerc-Blankenburg K.P."/>
            <person name="Chen R."/>
            <person name="Chen Z."/>
            <person name="Davis C."/>
            <person name="Delgado O."/>
            <person name="Dinh H.H."/>
            <person name="Dong W."/>
            <person name="Draper H."/>
            <person name="Ernst S."/>
            <person name="Fu G."/>
            <person name="Gonzalez-Garay M.L."/>
            <person name="Garcia D.K."/>
            <person name="Gillett W."/>
            <person name="Gu J."/>
            <person name="Hao B."/>
            <person name="Haugen E."/>
            <person name="Havlak P."/>
            <person name="He X."/>
            <person name="Hennig S."/>
            <person name="Hu S."/>
            <person name="Huang W."/>
            <person name="Jackson L.R."/>
            <person name="Jacob L.S."/>
            <person name="Kelly S.H."/>
            <person name="Kube M."/>
            <person name="Levy R."/>
            <person name="Li Z."/>
            <person name="Liu B."/>
            <person name="Liu J."/>
            <person name="Liu W."/>
            <person name="Lu J."/>
            <person name="Maheshwari M."/>
            <person name="Nguyen B.-V."/>
            <person name="Okwuonu G.O."/>
            <person name="Palmeiri A."/>
            <person name="Pasternak S."/>
            <person name="Perez L.M."/>
            <person name="Phelps K.A."/>
            <person name="Plopper F.J."/>
            <person name="Qiang B."/>
            <person name="Raymond C."/>
            <person name="Rodriguez R."/>
            <person name="Saenphimmachak C."/>
            <person name="Santibanez J."/>
            <person name="Shen H."/>
            <person name="Shen Y."/>
            <person name="Subramanian S."/>
            <person name="Tabor P.E."/>
            <person name="Verduzco D."/>
            <person name="Waldron L."/>
            <person name="Wang J."/>
            <person name="Wang J."/>
            <person name="Wang Q."/>
            <person name="Williams G.A."/>
            <person name="Wong G.K.-S."/>
            <person name="Yao Z."/>
            <person name="Zhang J."/>
            <person name="Zhang X."/>
            <person name="Zhao G."/>
            <person name="Zhou J."/>
            <person name="Zhou Y."/>
            <person name="Nelson D."/>
            <person name="Lehrach H."/>
            <person name="Reinhardt R."/>
            <person name="Naylor S.L."/>
            <person name="Yang H."/>
            <person name="Olson M."/>
            <person name="Weinstock G."/>
            <person name="Gibbs R.A."/>
        </authorList>
    </citation>
    <scope>NUCLEOTIDE SEQUENCE [LARGE SCALE GENOMIC DNA]</scope>
</reference>
<feature type="chain" id="PRO_0000441719" description="Protein FAM240A">
    <location>
        <begin position="1"/>
        <end position="83"/>
    </location>
</feature>
<feature type="sequence conflict" description="In Ref. 1; BAC85423." evidence="1" ref="1">
    <original>H</original>
    <variation>R</variation>
    <location>
        <position position="27"/>
    </location>
</feature>
<evidence type="ECO:0000305" key="1"/>
<evidence type="ECO:0000312" key="2">
    <source>
        <dbReference type="HGNC" id="HGNC:52390"/>
    </source>
</evidence>
<name>F240A_HUMAN</name>
<protein>
    <recommendedName>
        <fullName evidence="1">Protein FAM240A</fullName>
    </recommendedName>
</protein>
<dbReference type="EMBL" id="AK130758">
    <property type="protein sequence ID" value="BAC85423.1"/>
    <property type="status" value="ALT_SEQ"/>
    <property type="molecule type" value="mRNA"/>
</dbReference>
<dbReference type="EMBL" id="AC104304">
    <property type="status" value="NOT_ANNOTATED_CDS"/>
    <property type="molecule type" value="Genomic_DNA"/>
</dbReference>
<dbReference type="CCDS" id="CCDS82764.2"/>
<dbReference type="RefSeq" id="NP_001182371.2">
    <property type="nucleotide sequence ID" value="NM_001195442.2"/>
</dbReference>
<dbReference type="SMR" id="A0A1B0GVK7"/>
<dbReference type="STRING" id="9606.ENSP00000490556"/>
<dbReference type="BioMuta" id="FAM240A"/>
<dbReference type="DNASU" id="100132146"/>
<dbReference type="Ensembl" id="ENST00000640551.3">
    <property type="protein sequence ID" value="ENSP00000491838.2"/>
    <property type="gene ID" value="ENSG00000283473.5"/>
</dbReference>
<dbReference type="GeneID" id="100132146"/>
<dbReference type="KEGG" id="hsa:100132146"/>
<dbReference type="MANE-Select" id="ENST00000640551.3">
    <property type="protein sequence ID" value="ENSP00000491838.2"/>
    <property type="RefSeq nucleotide sequence ID" value="NM_001195442.2"/>
    <property type="RefSeq protein sequence ID" value="NP_001182371.2"/>
</dbReference>
<dbReference type="AGR" id="HGNC:52390"/>
<dbReference type="CTD" id="100132146"/>
<dbReference type="GeneCards" id="FAM240A"/>
<dbReference type="HGNC" id="HGNC:52390">
    <property type="gene designation" value="FAM240A"/>
</dbReference>
<dbReference type="HPA" id="ENSG00000283473">
    <property type="expression patterns" value="Not detected"/>
</dbReference>
<dbReference type="neXtProt" id="NX_A0A1B0GVK7"/>
<dbReference type="OpenTargets" id="ENSG00000283473"/>
<dbReference type="VEuPathDB" id="HostDB:ENSG00000283473"/>
<dbReference type="GeneTree" id="ENSGT00530000069333"/>
<dbReference type="InParanoid" id="A0A1B0GVK7"/>
<dbReference type="OMA" id="IGKQTCY"/>
<dbReference type="OrthoDB" id="8880235at2759"/>
<dbReference type="PAN-GO" id="A0A1B0GVK7">
    <property type="GO annotations" value="0 GO annotations based on evolutionary models"/>
</dbReference>
<dbReference type="BioGRID-ORCS" id="100132146">
    <property type="hits" value="7 hits in 205 CRISPR screens"/>
</dbReference>
<dbReference type="Pharos" id="A0A1B0GVK7">
    <property type="development level" value="Tdark"/>
</dbReference>
<dbReference type="PRO" id="PR:A0A1B0GVK7"/>
<dbReference type="Proteomes" id="UP000005640">
    <property type="component" value="Chromosome 3"/>
</dbReference>
<dbReference type="RNAct" id="A0A1B0GVK7">
    <property type="molecule type" value="protein"/>
</dbReference>
<dbReference type="Bgee" id="ENSG00000283473">
    <property type="expression patterns" value="Expressed in male germ line stem cell (sensu Vertebrata) in testis and 32 other cell types or tissues"/>
</dbReference>
<dbReference type="InterPro" id="IPR040261">
    <property type="entry name" value="FAM240"/>
</dbReference>
<dbReference type="PANTHER" id="PTHR40387:SF3">
    <property type="entry name" value="PROTEIN FAM240A"/>
    <property type="match status" value="1"/>
</dbReference>
<dbReference type="PANTHER" id="PTHR40387">
    <property type="entry name" value="PROTEIN FAM240B"/>
    <property type="match status" value="1"/>
</dbReference>
<organism>
    <name type="scientific">Homo sapiens</name>
    <name type="common">Human</name>
    <dbReference type="NCBI Taxonomy" id="9606"/>
    <lineage>
        <taxon>Eukaryota</taxon>
        <taxon>Metazoa</taxon>
        <taxon>Chordata</taxon>
        <taxon>Craniata</taxon>
        <taxon>Vertebrata</taxon>
        <taxon>Euteleostomi</taxon>
        <taxon>Mammalia</taxon>
        <taxon>Eutheria</taxon>
        <taxon>Euarchontoglires</taxon>
        <taxon>Primates</taxon>
        <taxon>Haplorrhini</taxon>
        <taxon>Catarrhini</taxon>
        <taxon>Hominidae</taxon>
        <taxon>Homo</taxon>
    </lineage>
</organism>
<comment type="similarity">
    <text evidence="1">Belongs to the FAM240 family.</text>
</comment>
<comment type="caution">
    <text evidence="1">It is uncertain whether Met-1 or Met-7 is the initiator.</text>
</comment>
<comment type="sequence caution" evidence="1">
    <conflict type="erroneous translation">
        <sequence resource="EMBL-CDS" id="BAC85423"/>
    </conflict>
    <text>Wrong choice of frame.</text>
</comment>
<keyword id="KW-1185">Reference proteome</keyword>
<proteinExistence type="inferred from homology"/>
<gene>
    <name evidence="2" type="primary">FAM240A</name>
</gene>
<accession>A0A1B0GVK7</accession>
<accession>Q6ZNS2</accession>
<sequence length="83" mass="10377">MRLFSGMNNQYTRREVFCRNTCHDLKHFWEREIGKQTYYRESEERRLGRSALRKLREEWKQRLETKLRLRNNPEDTEKRTNVG</sequence>